<comment type="subunit">
    <text evidence="1">Part of the 50S ribosomal subunit.</text>
</comment>
<comment type="similarity">
    <text evidence="1">Belongs to the universal ribosomal protein uL30 family.</text>
</comment>
<comment type="sequence caution" evidence="2">
    <conflict type="erroneous initiation">
        <sequence resource="EMBL-CDS" id="ABM81151"/>
    </conflict>
    <text>Extended N-terminus.</text>
</comment>
<sequence>MAAAREAEKKEEGQKQVKLYAIIRIRGRVDVHPDVEYTLKLLRLHRKFHLVLYPSTLPGIERMIHKVKDWVTWGEIDRDTLVELLRRRGRISGNKPLTDEYVQEKLGLKGGIEELADKLLKGEIMLHKLYDKQKKIWIIKPVFRLHPPRGGFKGSIKKPYGAGGELGYRGPAINELIRRML</sequence>
<keyword id="KW-1185">Reference proteome</keyword>
<keyword id="KW-0687">Ribonucleoprotein</keyword>
<keyword id="KW-0689">Ribosomal protein</keyword>
<proteinExistence type="inferred from homology"/>
<name>RL30_HYPBU</name>
<accession>A2BME0</accession>
<reference key="1">
    <citation type="journal article" date="2007" name="Archaea">
        <title>The genome of Hyperthermus butylicus: a sulfur-reducing, peptide fermenting, neutrophilic Crenarchaeote growing up to 108 degrees C.</title>
        <authorList>
            <person name="Bruegger K."/>
            <person name="Chen L."/>
            <person name="Stark M."/>
            <person name="Zibat A."/>
            <person name="Redder P."/>
            <person name="Ruepp A."/>
            <person name="Awayez M."/>
            <person name="She Q."/>
            <person name="Garrett R.A."/>
            <person name="Klenk H.-P."/>
        </authorList>
    </citation>
    <scope>NUCLEOTIDE SEQUENCE [LARGE SCALE GENOMIC DNA]</scope>
    <source>
        <strain>DSM 5456 / JCM 9403 / PLM1-5</strain>
    </source>
</reference>
<dbReference type="EMBL" id="CP000493">
    <property type="protein sequence ID" value="ABM81151.1"/>
    <property type="status" value="ALT_INIT"/>
    <property type="molecule type" value="Genomic_DNA"/>
</dbReference>
<dbReference type="RefSeq" id="WP_048061861.1">
    <property type="nucleotide sequence ID" value="NC_008818.1"/>
</dbReference>
<dbReference type="SMR" id="A2BME0"/>
<dbReference type="STRING" id="415426.Hbut_1321"/>
<dbReference type="EnsemblBacteria" id="ABM81151">
    <property type="protein sequence ID" value="ABM81151"/>
    <property type="gene ID" value="Hbut_1321"/>
</dbReference>
<dbReference type="GeneID" id="4781622"/>
<dbReference type="KEGG" id="hbu:Hbut_1321"/>
<dbReference type="eggNOG" id="arCOG04086">
    <property type="taxonomic scope" value="Archaea"/>
</dbReference>
<dbReference type="HOGENOM" id="CLU_055156_6_0_2"/>
<dbReference type="OrthoDB" id="6379at2157"/>
<dbReference type="Proteomes" id="UP000002593">
    <property type="component" value="Chromosome"/>
</dbReference>
<dbReference type="GO" id="GO:0022625">
    <property type="term" value="C:cytosolic large ribosomal subunit"/>
    <property type="evidence" value="ECO:0007669"/>
    <property type="project" value="TreeGrafter"/>
</dbReference>
<dbReference type="GO" id="GO:0003723">
    <property type="term" value="F:RNA binding"/>
    <property type="evidence" value="ECO:0007669"/>
    <property type="project" value="TreeGrafter"/>
</dbReference>
<dbReference type="GO" id="GO:0003735">
    <property type="term" value="F:structural constituent of ribosome"/>
    <property type="evidence" value="ECO:0007669"/>
    <property type="project" value="InterPro"/>
</dbReference>
<dbReference type="GO" id="GO:0000463">
    <property type="term" value="P:maturation of LSU-rRNA from tricistronic rRNA transcript (SSU-rRNA, 5.8S rRNA, LSU-rRNA)"/>
    <property type="evidence" value="ECO:0007669"/>
    <property type="project" value="TreeGrafter"/>
</dbReference>
<dbReference type="GO" id="GO:0006412">
    <property type="term" value="P:translation"/>
    <property type="evidence" value="ECO:0007669"/>
    <property type="project" value="UniProtKB-UniRule"/>
</dbReference>
<dbReference type="CDD" id="cd01657">
    <property type="entry name" value="Ribosomal_L7_archeal_euk"/>
    <property type="match status" value="1"/>
</dbReference>
<dbReference type="Gene3D" id="1.10.15.30">
    <property type="match status" value="1"/>
</dbReference>
<dbReference type="Gene3D" id="3.30.1390.20">
    <property type="entry name" value="Ribosomal protein L30, ferredoxin-like fold domain"/>
    <property type="match status" value="1"/>
</dbReference>
<dbReference type="HAMAP" id="MF_01371_A">
    <property type="entry name" value="Ribosomal_uL30_A"/>
    <property type="match status" value="1"/>
</dbReference>
<dbReference type="InterPro" id="IPR036919">
    <property type="entry name" value="Ribo_uL30_ferredoxin-like_sf"/>
</dbReference>
<dbReference type="InterPro" id="IPR039699">
    <property type="entry name" value="Ribosomal_uL30"/>
</dbReference>
<dbReference type="InterPro" id="IPR005997">
    <property type="entry name" value="Ribosomal_uL30_arc"/>
</dbReference>
<dbReference type="InterPro" id="IPR035808">
    <property type="entry name" value="Ribosomal_uL30_euk_arc"/>
</dbReference>
<dbReference type="InterPro" id="IPR016082">
    <property type="entry name" value="Ribosomal_uL30_ferredoxin-like"/>
</dbReference>
<dbReference type="NCBIfam" id="NF004711">
    <property type="entry name" value="PRK06049.1"/>
    <property type="match status" value="1"/>
</dbReference>
<dbReference type="NCBIfam" id="TIGR01309">
    <property type="entry name" value="uL30_arch"/>
    <property type="match status" value="1"/>
</dbReference>
<dbReference type="PANTHER" id="PTHR11524">
    <property type="entry name" value="60S RIBOSOMAL PROTEIN L7"/>
    <property type="match status" value="1"/>
</dbReference>
<dbReference type="PANTHER" id="PTHR11524:SF16">
    <property type="entry name" value="LARGE RIBOSOMAL SUBUNIT PROTEIN UL30"/>
    <property type="match status" value="1"/>
</dbReference>
<dbReference type="Pfam" id="PF00327">
    <property type="entry name" value="Ribosomal_L30"/>
    <property type="match status" value="1"/>
</dbReference>
<dbReference type="SUPFAM" id="SSF55129">
    <property type="entry name" value="Ribosomal protein L30p/L7e"/>
    <property type="match status" value="1"/>
</dbReference>
<organism>
    <name type="scientific">Hyperthermus butylicus (strain DSM 5456 / JCM 9403 / PLM1-5)</name>
    <dbReference type="NCBI Taxonomy" id="415426"/>
    <lineage>
        <taxon>Archaea</taxon>
        <taxon>Thermoproteota</taxon>
        <taxon>Thermoprotei</taxon>
        <taxon>Desulfurococcales</taxon>
        <taxon>Pyrodictiaceae</taxon>
        <taxon>Hyperthermus</taxon>
    </lineage>
</organism>
<gene>
    <name evidence="1" type="primary">rpl30</name>
    <name type="ordered locus">Hbut_1321</name>
</gene>
<feature type="chain" id="PRO_0000347161" description="Large ribosomal subunit protein uL30">
    <location>
        <begin position="1"/>
        <end position="181"/>
    </location>
</feature>
<protein>
    <recommendedName>
        <fullName evidence="1">Large ribosomal subunit protein uL30</fullName>
    </recommendedName>
    <alternativeName>
        <fullName evidence="2">50S ribosomal protein L30</fullName>
    </alternativeName>
</protein>
<evidence type="ECO:0000255" key="1">
    <source>
        <dbReference type="HAMAP-Rule" id="MF_01371"/>
    </source>
</evidence>
<evidence type="ECO:0000305" key="2"/>